<feature type="chain" id="PRO_0000157141" description="Carbon monoxide dehydrogenase 1">
    <location>
        <begin position="1"/>
        <end position="628"/>
    </location>
</feature>
<feature type="binding site" evidence="2">
    <location>
        <position position="44"/>
    </location>
    <ligand>
        <name>[4Fe-4S] cluster</name>
        <dbReference type="ChEBI" id="CHEBI:49883"/>
        <label>1</label>
        <note>ligand shared between dimeric partners</note>
    </ligand>
</feature>
<feature type="binding site" evidence="2">
    <location>
        <position position="52"/>
    </location>
    <ligand>
        <name>[4Fe-4S] cluster</name>
        <dbReference type="ChEBI" id="CHEBI:49883"/>
        <label>1</label>
        <note>ligand shared between dimeric partners</note>
    </ligand>
</feature>
<feature type="binding site" evidence="2">
    <location>
        <position position="53"/>
    </location>
    <ligand>
        <name>[4Fe-4S] cluster</name>
        <dbReference type="ChEBI" id="CHEBI:49883"/>
        <label>2</label>
    </ligand>
</feature>
<feature type="binding site" evidence="2">
    <location>
        <position position="56"/>
    </location>
    <ligand>
        <name>[4Fe-4S] cluster</name>
        <dbReference type="ChEBI" id="CHEBI:49883"/>
        <label>2</label>
    </ligand>
</feature>
<feature type="binding site" evidence="2">
    <location>
        <position position="61"/>
    </location>
    <ligand>
        <name>[4Fe-4S] cluster</name>
        <dbReference type="ChEBI" id="CHEBI:49883"/>
        <label>2</label>
    </ligand>
</feature>
<feature type="binding site" evidence="2">
    <location>
        <position position="75"/>
    </location>
    <ligand>
        <name>[4Fe-4S] cluster</name>
        <dbReference type="ChEBI" id="CHEBI:49883"/>
        <label>2</label>
    </ligand>
</feature>
<feature type="binding site" evidence="2">
    <location>
        <position position="266"/>
    </location>
    <ligand>
        <name>[Ni-4Fe-5S] cluster</name>
        <dbReference type="ChEBI" id="CHEBI:177874"/>
    </ligand>
</feature>
<feature type="binding site" evidence="2">
    <location>
        <position position="302"/>
    </location>
    <ligand>
        <name>[Ni-4Fe-5S] cluster</name>
        <dbReference type="ChEBI" id="CHEBI:177874"/>
    </ligand>
</feature>
<feature type="binding site" evidence="2">
    <location>
        <position position="340"/>
    </location>
    <ligand>
        <name>[Ni-4Fe-5S] cluster</name>
        <dbReference type="ChEBI" id="CHEBI:177874"/>
    </ligand>
</feature>
<feature type="binding site" evidence="2">
    <location>
        <position position="448"/>
    </location>
    <ligand>
        <name>[Ni-4Fe-5S] cluster</name>
        <dbReference type="ChEBI" id="CHEBI:177874"/>
    </ligand>
</feature>
<feature type="binding site" evidence="2">
    <location>
        <position position="478"/>
    </location>
    <ligand>
        <name>[Ni-4Fe-5S] cluster</name>
        <dbReference type="ChEBI" id="CHEBI:177874"/>
    </ligand>
</feature>
<feature type="binding site" evidence="2">
    <location>
        <position position="519"/>
    </location>
    <ligand>
        <name>[Ni-4Fe-5S] cluster</name>
        <dbReference type="ChEBI" id="CHEBI:177874"/>
    </ligand>
</feature>
<accession>Q8TKW2</accession>
<organism>
    <name type="scientific">Methanosarcina acetivorans (strain ATCC 35395 / DSM 2834 / JCM 12185 / C2A)</name>
    <dbReference type="NCBI Taxonomy" id="188937"/>
    <lineage>
        <taxon>Archaea</taxon>
        <taxon>Methanobacteriati</taxon>
        <taxon>Methanobacteriota</taxon>
        <taxon>Stenosarchaea group</taxon>
        <taxon>Methanomicrobia</taxon>
        <taxon>Methanosarcinales</taxon>
        <taxon>Methanosarcinaceae</taxon>
        <taxon>Methanosarcina</taxon>
    </lineage>
</organism>
<protein>
    <recommendedName>
        <fullName>Carbon monoxide dehydrogenase 1</fullName>
        <shortName>CODH 1</shortName>
        <ecNumber evidence="2">1.2.7.4</ecNumber>
    </recommendedName>
</protein>
<keyword id="KW-0004">4Fe-4S</keyword>
<keyword id="KW-0408">Iron</keyword>
<keyword id="KW-0411">Iron-sulfur</keyword>
<keyword id="KW-0479">Metal-binding</keyword>
<keyword id="KW-0533">Nickel</keyword>
<keyword id="KW-0560">Oxidoreductase</keyword>
<keyword id="KW-1185">Reference proteome</keyword>
<dbReference type="EC" id="1.2.7.4" evidence="2"/>
<dbReference type="EMBL" id="AE010299">
    <property type="protein sequence ID" value="AAM06652.1"/>
    <property type="molecule type" value="Genomic_DNA"/>
</dbReference>
<dbReference type="SMR" id="Q8TKW2"/>
<dbReference type="FunCoup" id="Q8TKW2">
    <property type="interactions" value="72"/>
</dbReference>
<dbReference type="STRING" id="188937.MA_3282"/>
<dbReference type="EnsemblBacteria" id="AAM06652">
    <property type="protein sequence ID" value="AAM06652"/>
    <property type="gene ID" value="MA_3282"/>
</dbReference>
<dbReference type="KEGG" id="mac:MA_3282"/>
<dbReference type="HOGENOM" id="CLU_030631_0_0_2"/>
<dbReference type="InParanoid" id="Q8TKW2"/>
<dbReference type="PhylomeDB" id="Q8TKW2"/>
<dbReference type="Proteomes" id="UP000002487">
    <property type="component" value="Chromosome"/>
</dbReference>
<dbReference type="GO" id="GO:0051539">
    <property type="term" value="F:4 iron, 4 sulfur cluster binding"/>
    <property type="evidence" value="ECO:0007669"/>
    <property type="project" value="UniProtKB-KW"/>
</dbReference>
<dbReference type="GO" id="GO:0043885">
    <property type="term" value="F:anaerobic carbon-monoxide dehydrogenase activity"/>
    <property type="evidence" value="ECO:0007669"/>
    <property type="project" value="UniProtKB-EC"/>
</dbReference>
<dbReference type="GO" id="GO:0050418">
    <property type="term" value="F:hydroxylamine reductase activity"/>
    <property type="evidence" value="ECO:0000318"/>
    <property type="project" value="GO_Central"/>
</dbReference>
<dbReference type="GO" id="GO:0016151">
    <property type="term" value="F:nickel cation binding"/>
    <property type="evidence" value="ECO:0007669"/>
    <property type="project" value="InterPro"/>
</dbReference>
<dbReference type="GO" id="GO:0004601">
    <property type="term" value="F:peroxidase activity"/>
    <property type="evidence" value="ECO:0000318"/>
    <property type="project" value="GO_Central"/>
</dbReference>
<dbReference type="GO" id="GO:0006091">
    <property type="term" value="P:generation of precursor metabolites and energy"/>
    <property type="evidence" value="ECO:0007669"/>
    <property type="project" value="InterPro"/>
</dbReference>
<dbReference type="GO" id="GO:0046210">
    <property type="term" value="P:nitric oxide catabolic process"/>
    <property type="evidence" value="ECO:0000318"/>
    <property type="project" value="GO_Central"/>
</dbReference>
<dbReference type="GO" id="GO:0042542">
    <property type="term" value="P:response to hydrogen peroxide"/>
    <property type="evidence" value="ECO:0000318"/>
    <property type="project" value="GO_Central"/>
</dbReference>
<dbReference type="CDD" id="cd01915">
    <property type="entry name" value="CODH"/>
    <property type="match status" value="1"/>
</dbReference>
<dbReference type="FunFam" id="1.20.1270.30:FF:000001">
    <property type="entry name" value="Carbon monoxide dehydrogenase"/>
    <property type="match status" value="1"/>
</dbReference>
<dbReference type="FunFam" id="3.40.50.2030:FF:000003">
    <property type="entry name" value="Carbon monoxide dehydrogenase"/>
    <property type="match status" value="1"/>
</dbReference>
<dbReference type="FunFam" id="3.40.50.2030:FF:000005">
    <property type="entry name" value="Carbon monoxide dehydrogenase"/>
    <property type="match status" value="1"/>
</dbReference>
<dbReference type="Gene3D" id="1.20.1270.30">
    <property type="match status" value="1"/>
</dbReference>
<dbReference type="Gene3D" id="3.40.50.2030">
    <property type="match status" value="2"/>
</dbReference>
<dbReference type="InterPro" id="IPR016101">
    <property type="entry name" value="CO_DH_a-bundle"/>
</dbReference>
<dbReference type="InterPro" id="IPR010047">
    <property type="entry name" value="CODH"/>
</dbReference>
<dbReference type="InterPro" id="IPR004137">
    <property type="entry name" value="HCP/CODH"/>
</dbReference>
<dbReference type="InterPro" id="IPR016099">
    <property type="entry name" value="Prismane-like_a/b-sand"/>
</dbReference>
<dbReference type="InterPro" id="IPR011254">
    <property type="entry name" value="Prismane-like_sf"/>
</dbReference>
<dbReference type="NCBIfam" id="TIGR01702">
    <property type="entry name" value="CO_DH_cata"/>
    <property type="match status" value="1"/>
</dbReference>
<dbReference type="PANTHER" id="PTHR30109:SF4">
    <property type="entry name" value="CARBON MONOXIDE DEHYDROGENASE"/>
    <property type="match status" value="1"/>
</dbReference>
<dbReference type="PANTHER" id="PTHR30109">
    <property type="entry name" value="HYDROXYLAMINE REDUCTASE"/>
    <property type="match status" value="1"/>
</dbReference>
<dbReference type="Pfam" id="PF03063">
    <property type="entry name" value="Prismane"/>
    <property type="match status" value="1"/>
</dbReference>
<dbReference type="PIRSF" id="PIRSF005023">
    <property type="entry name" value="CODH"/>
    <property type="match status" value="1"/>
</dbReference>
<dbReference type="SUPFAM" id="SSF56821">
    <property type="entry name" value="Prismane protein-like"/>
    <property type="match status" value="1"/>
</dbReference>
<evidence type="ECO:0000250" key="1"/>
<evidence type="ECO:0000250" key="2">
    <source>
        <dbReference type="UniProtKB" id="Q9F8A8"/>
    </source>
</evidence>
<evidence type="ECO:0000305" key="3"/>
<proteinExistence type="inferred from homology"/>
<reference key="1">
    <citation type="journal article" date="2002" name="Genome Res.">
        <title>The genome of Methanosarcina acetivorans reveals extensive metabolic and physiological diversity.</title>
        <authorList>
            <person name="Galagan J.E."/>
            <person name="Nusbaum C."/>
            <person name="Roy A."/>
            <person name="Endrizzi M.G."/>
            <person name="Macdonald P."/>
            <person name="FitzHugh W."/>
            <person name="Calvo S."/>
            <person name="Engels R."/>
            <person name="Smirnov S."/>
            <person name="Atnoor D."/>
            <person name="Brown A."/>
            <person name="Allen N."/>
            <person name="Naylor J."/>
            <person name="Stange-Thomann N."/>
            <person name="DeArellano K."/>
            <person name="Johnson R."/>
            <person name="Linton L."/>
            <person name="McEwan P."/>
            <person name="McKernan K."/>
            <person name="Talamas J."/>
            <person name="Tirrell A."/>
            <person name="Ye W."/>
            <person name="Zimmer A."/>
            <person name="Barber R.D."/>
            <person name="Cann I."/>
            <person name="Graham D.E."/>
            <person name="Grahame D.A."/>
            <person name="Guss A.M."/>
            <person name="Hedderich R."/>
            <person name="Ingram-Smith C."/>
            <person name="Kuettner H.C."/>
            <person name="Krzycki J.A."/>
            <person name="Leigh J.A."/>
            <person name="Li W."/>
            <person name="Liu J."/>
            <person name="Mukhopadhyay B."/>
            <person name="Reeve J.N."/>
            <person name="Smith K."/>
            <person name="Springer T.A."/>
            <person name="Umayam L.A."/>
            <person name="White O."/>
            <person name="White R.H."/>
            <person name="de Macario E.C."/>
            <person name="Ferry J.G."/>
            <person name="Jarrell K.F."/>
            <person name="Jing H."/>
            <person name="Macario A.J.L."/>
            <person name="Paulsen I.T."/>
            <person name="Pritchett M."/>
            <person name="Sowers K.R."/>
            <person name="Swanson R.V."/>
            <person name="Zinder S.H."/>
            <person name="Lander E."/>
            <person name="Metcalf W.W."/>
            <person name="Birren B."/>
        </authorList>
    </citation>
    <scope>NUCLEOTIDE SEQUENCE [LARGE SCALE GENOMIC DNA]</scope>
    <source>
        <strain>ATCC 35395 / DSM 2834 / JCM 12185 / C2A</strain>
    </source>
</reference>
<sequence length="628" mass="66367">MGKEMKQTAFEKSIDSASQIMLQKAEDEGIETAWDRYEQQLPQCSFGQLGICCRNCNMGPCRIDPFGEGTEKGICGATADIIVARNLLRMIAAGAAAHSDHARDAVLTFKKMSEGKAGSYRIKDEAKLYSLASEYGISAEEKSREEVAVELASALLSEFGKQEGPILCTKRAPESRLKLWSELGIEPRGIDREIVECMHRTHIGVDNDATHILLHGLRTSLSDGWGGSMIATEIQDVLFGTPEPKKSTVNLGVLSHDKVNVIVHGHEPILSEMIVEAAEDPELLELAEEKGATGINVAGICCTGNETLMRHGTPIAGTFLQQELAVITGAVEAMVVDVQCIMPSLGNLTGCYHTKFISTSPKADFPGTARMEFHEEEAYATAKEIVKAAVENFPNRNLKKVSIPEEKQECMVGFSAEAILKALGGSPAPLIEAIAGGAIKGIGAVVGCNNVKIQHNYGHVNLVKELIKNNVLVVTTGCNAIACAEAGLLVPEAAALAGDGLKGVCEALGIPPVLHMGSCVDISRILVLASAVANSLGVDISDLPAAGAAPEWMSEKAVSIGAYVVSSGVFTVLGTIPPVLGSQAVTALLTKGLDGVIGASFAVEPDPFKAADLMLEHIEGKRKALGLK</sequence>
<name>COOS1_METAC</name>
<gene>
    <name type="primary">cooS1</name>
    <name type="ordered locus">MA_3282</name>
</gene>
<comment type="function">
    <text evidence="2">CODH oxidizes carbon monoxide coupled, via CooF, to the reduction of a hydrogen cation by a hydrogenase (possibly CooH).</text>
</comment>
<comment type="catalytic activity">
    <reaction evidence="2">
        <text>CO + 2 oxidized [2Fe-2S]-[ferredoxin] + H2O = 2 reduced [2Fe-2S]-[ferredoxin] + CO2 + 2 H(+)</text>
        <dbReference type="Rhea" id="RHEA:21040"/>
        <dbReference type="Rhea" id="RHEA-COMP:10000"/>
        <dbReference type="Rhea" id="RHEA-COMP:10001"/>
        <dbReference type="ChEBI" id="CHEBI:15377"/>
        <dbReference type="ChEBI" id="CHEBI:15378"/>
        <dbReference type="ChEBI" id="CHEBI:16526"/>
        <dbReference type="ChEBI" id="CHEBI:17245"/>
        <dbReference type="ChEBI" id="CHEBI:33737"/>
        <dbReference type="ChEBI" id="CHEBI:33738"/>
        <dbReference type="EC" id="1.2.7.4"/>
    </reaction>
</comment>
<comment type="cofactor">
    <cofactor evidence="2">
        <name>[4Fe-4S] cluster</name>
        <dbReference type="ChEBI" id="CHEBI:49883"/>
    </cofactor>
    <text evidence="2">Binds 3 [4Fe-4S] clusters per homodimer.</text>
</comment>
<comment type="cofactor">
    <cofactor evidence="2">
        <name>[Ni-4Fe-5S] cluster</name>
        <dbReference type="ChEBI" id="CHEBI:177874"/>
    </cofactor>
    <text evidence="2">Binds 2 [Ni-4Fe-5S] clusters per homodimer.</text>
</comment>
<comment type="subunit">
    <text evidence="1">Homodimer.</text>
</comment>
<comment type="domain">
    <text evidence="2">Cluster B is an all-cysteinyl-liganded 4Fe-4S cluster; cluster C is a mixed Ni-Fe-S cluster which is the active site of CO oxidation. Cluster D is also an all-cysteinyl-liganded 4Fe-4S cluster that bridges the two subunits of the CODH dimer.</text>
</comment>
<comment type="similarity">
    <text evidence="3">Belongs to the Ni-containing carbon monoxide dehydrogenase family.</text>
</comment>